<keyword id="KW-0027">Amidation</keyword>
<keyword id="KW-0903">Direct protein sequencing</keyword>
<keyword id="KW-0372">Hormone</keyword>
<keyword id="KW-1185">Reference proteome</keyword>
<keyword id="KW-0964">Secreted</keyword>
<keyword id="KW-0732">Signal</keyword>
<evidence type="ECO:0000250" key="1"/>
<evidence type="ECO:0000250" key="2">
    <source>
        <dbReference type="UniProtKB" id="P01298"/>
    </source>
</evidence>
<evidence type="ECO:0000256" key="3">
    <source>
        <dbReference type="SAM" id="MobiDB-lite"/>
    </source>
</evidence>
<evidence type="ECO:0000269" key="4">
    <source>
    </source>
</evidence>
<evidence type="ECO:0000269" key="5">
    <source>
    </source>
</evidence>
<evidence type="ECO:0000303" key="6">
    <source>
    </source>
</evidence>
<evidence type="ECO:0000305" key="7"/>
<reference key="1">
    <citation type="journal article" date="1988" name="J. Biol. Chem.">
        <title>Novel organization and processing of the guinea pig pancreatic polypeptide precursor.</title>
        <authorList>
            <person name="Blackstone C.D."/>
            <person name="Seino S."/>
            <person name="Takeuchi T."/>
            <person name="Yamada T."/>
            <person name="Steiner D.F."/>
        </authorList>
    </citation>
    <scope>NUCLEOTIDE SEQUENCE [MRNA]</scope>
    <scope>PROTEOLYTIC PROCESSING</scope>
    <scope>AMIDATION</scope>
</reference>
<reference key="2">
    <citation type="journal article" date="1987" name="Peptides">
        <title>Guinea pig pancreatic polypeptide: structure and pancreatic content.</title>
        <authorList>
            <person name="Eng J."/>
            <person name="Huang C.-G."/>
            <person name="Pan Y.-C."/>
            <person name="Hulmes J.D."/>
            <person name="Yalow R.S."/>
        </authorList>
    </citation>
    <scope>PROTEIN SEQUENCE OF 27-62</scope>
    <source>
        <tissue>Pancreas</tissue>
    </source>
</reference>
<sequence>MTATRCCLWLLLLGTCMALLLPEAWGAPLEPVYPGDDATPQQMAQYAAEMRRYINMLTRPRYGKSAEEDALGLPVWRQSHAAAPGGSHRHPPAGLPAAKGGTGVSGSPPKPWDCLPCRAHSLPSQS</sequence>
<feature type="signal peptide" evidence="5">
    <location>
        <begin position="1"/>
        <end position="26"/>
    </location>
</feature>
<feature type="peptide" id="PRO_0000025361" description="Pancreatic polypeptide">
    <location>
        <begin position="27"/>
        <end position="62"/>
    </location>
</feature>
<feature type="peptide" id="PRO_0000025362" description="Pancreatic icosapeptide-like">
    <location>
        <begin position="65"/>
        <end position="126"/>
    </location>
</feature>
<feature type="region of interest" description="Disordered" evidence="3">
    <location>
        <begin position="77"/>
        <end position="126"/>
    </location>
</feature>
<feature type="modified residue" description="Tyrosine amide" evidence="1">
    <location>
        <position position="62"/>
    </location>
</feature>
<gene>
    <name type="primary">PPY</name>
</gene>
<dbReference type="EMBL" id="M29543">
    <property type="protein sequence ID" value="AAA37051.1"/>
    <property type="molecule type" value="mRNA"/>
</dbReference>
<dbReference type="PIR" id="A28256">
    <property type="entry name" value="A28256"/>
</dbReference>
<dbReference type="RefSeq" id="NP_001166476.1">
    <property type="nucleotide sequence ID" value="NM_001173005.1"/>
</dbReference>
<dbReference type="FunCoup" id="P13083">
    <property type="interactions" value="426"/>
</dbReference>
<dbReference type="STRING" id="10141.ENSCPOP00000014525"/>
<dbReference type="GeneID" id="100135605"/>
<dbReference type="KEGG" id="cpoc:100135605"/>
<dbReference type="CTD" id="5539"/>
<dbReference type="eggNOG" id="ENOG502TD4B">
    <property type="taxonomic scope" value="Eukaryota"/>
</dbReference>
<dbReference type="InParanoid" id="P13083"/>
<dbReference type="OrthoDB" id="9901897at2759"/>
<dbReference type="Proteomes" id="UP000005447">
    <property type="component" value="Unassembled WGS sequence"/>
</dbReference>
<dbReference type="GO" id="GO:0005615">
    <property type="term" value="C:extracellular space"/>
    <property type="evidence" value="ECO:0007669"/>
    <property type="project" value="TreeGrafter"/>
</dbReference>
<dbReference type="GO" id="GO:0005184">
    <property type="term" value="F:neuropeptide hormone activity"/>
    <property type="evidence" value="ECO:0007669"/>
    <property type="project" value="TreeGrafter"/>
</dbReference>
<dbReference type="GO" id="GO:0031841">
    <property type="term" value="F:neuropeptide Y receptor binding"/>
    <property type="evidence" value="ECO:0007669"/>
    <property type="project" value="TreeGrafter"/>
</dbReference>
<dbReference type="GO" id="GO:0007631">
    <property type="term" value="P:feeding behavior"/>
    <property type="evidence" value="ECO:0007669"/>
    <property type="project" value="TreeGrafter"/>
</dbReference>
<dbReference type="GO" id="GO:0007218">
    <property type="term" value="P:neuropeptide signaling pathway"/>
    <property type="evidence" value="ECO:0007669"/>
    <property type="project" value="TreeGrafter"/>
</dbReference>
<dbReference type="CDD" id="cd00126">
    <property type="entry name" value="PAH"/>
    <property type="match status" value="1"/>
</dbReference>
<dbReference type="Gene3D" id="6.10.250.900">
    <property type="match status" value="1"/>
</dbReference>
<dbReference type="InterPro" id="IPR001955">
    <property type="entry name" value="Pancreatic_hormone-like"/>
</dbReference>
<dbReference type="InterPro" id="IPR020392">
    <property type="entry name" value="Pancreatic_hormone-like_CS"/>
</dbReference>
<dbReference type="PANTHER" id="PTHR10533">
    <property type="entry name" value="NEUROPEPTIDE Y/PANCREATIC HORMONE/PEPTIDE YY"/>
    <property type="match status" value="1"/>
</dbReference>
<dbReference type="PANTHER" id="PTHR10533:SF2">
    <property type="entry name" value="PANCREATIC POLYPEPTIDE PROHORMONE"/>
    <property type="match status" value="1"/>
</dbReference>
<dbReference type="Pfam" id="PF00159">
    <property type="entry name" value="Hormone_3"/>
    <property type="match status" value="1"/>
</dbReference>
<dbReference type="PRINTS" id="PR00278">
    <property type="entry name" value="PANCHORMONE"/>
</dbReference>
<dbReference type="SMART" id="SM00309">
    <property type="entry name" value="PAH"/>
    <property type="match status" value="1"/>
</dbReference>
<dbReference type="PROSITE" id="PS00265">
    <property type="entry name" value="PANCREATIC_HORMONE_1"/>
    <property type="match status" value="1"/>
</dbReference>
<dbReference type="PROSITE" id="PS50276">
    <property type="entry name" value="PANCREATIC_HORMONE_2"/>
    <property type="match status" value="1"/>
</dbReference>
<accession>P13083</accession>
<comment type="function">
    <molecule>Pancreatic polypeptide</molecule>
    <text evidence="2">Hormone secreted by pancreatic cells that acts as a regulator of pancreatic and gastrointestinal functions probably by signaling through the G protein-coupled receptor NPY4R2.</text>
</comment>
<comment type="subcellular location">
    <subcellularLocation>
        <location evidence="2">Secreted</location>
    </subcellularLocation>
</comment>
<comment type="PTM">
    <text evidence="4">No icosapeptide-like peptide is cleaved from the C-terminal.</text>
</comment>
<comment type="similarity">
    <text evidence="7">Belongs to the NPY family.</text>
</comment>
<protein>
    <recommendedName>
        <fullName evidence="7">Pancreatic polypeptide prohormone</fullName>
    </recommendedName>
    <component>
        <recommendedName>
            <fullName evidence="6">Pancreatic polypeptide</fullName>
            <shortName evidence="6">PP</shortName>
        </recommendedName>
    </component>
    <component>
        <recommendedName>
            <fullName evidence="6">Pancreatic icosapeptide-like</fullName>
        </recommendedName>
    </component>
</protein>
<proteinExistence type="evidence at protein level"/>
<name>PAHO_CAVPO</name>
<organism>
    <name type="scientific">Cavia porcellus</name>
    <name type="common">Guinea pig</name>
    <dbReference type="NCBI Taxonomy" id="10141"/>
    <lineage>
        <taxon>Eukaryota</taxon>
        <taxon>Metazoa</taxon>
        <taxon>Chordata</taxon>
        <taxon>Craniata</taxon>
        <taxon>Vertebrata</taxon>
        <taxon>Euteleostomi</taxon>
        <taxon>Mammalia</taxon>
        <taxon>Eutheria</taxon>
        <taxon>Euarchontoglires</taxon>
        <taxon>Glires</taxon>
        <taxon>Rodentia</taxon>
        <taxon>Hystricomorpha</taxon>
        <taxon>Caviidae</taxon>
        <taxon>Cavia</taxon>
    </lineage>
</organism>